<accession>O80816</accession>
<accession>Q1PFG7</accession>
<accession>Q8LDZ6</accession>
<name>GLC_ARATH</name>
<gene>
    <name evidence="4 5" type="primary">GLC</name>
    <name evidence="7" type="ordered locus">At1g65450</name>
    <name evidence="8" type="ORF">T8F5.23</name>
</gene>
<dbReference type="EC" id="2.3.1.-" evidence="6"/>
<dbReference type="EMBL" id="AC004512">
    <property type="protein sequence ID" value="AAC27152.1"/>
    <property type="molecule type" value="Genomic_DNA"/>
</dbReference>
<dbReference type="EMBL" id="CP002684">
    <property type="protein sequence ID" value="AEE34376.1"/>
    <property type="molecule type" value="Genomic_DNA"/>
</dbReference>
<dbReference type="EMBL" id="CP002684">
    <property type="protein sequence ID" value="AEE34377.1"/>
    <property type="molecule type" value="Genomic_DNA"/>
</dbReference>
<dbReference type="EMBL" id="CP002684">
    <property type="protein sequence ID" value="AEE34378.1"/>
    <property type="molecule type" value="Genomic_DNA"/>
</dbReference>
<dbReference type="EMBL" id="DQ446396">
    <property type="protein sequence ID" value="ABE65741.1"/>
    <property type="molecule type" value="mRNA"/>
</dbReference>
<dbReference type="EMBL" id="AY085709">
    <property type="protein sequence ID" value="AAM62927.1"/>
    <property type="molecule type" value="mRNA"/>
</dbReference>
<dbReference type="PIR" id="T02368">
    <property type="entry name" value="T02368"/>
</dbReference>
<dbReference type="RefSeq" id="NP_001185318.1">
    <molecule id="O80816-2"/>
    <property type="nucleotide sequence ID" value="NM_001198389.2"/>
</dbReference>
<dbReference type="RefSeq" id="NP_001185319.1">
    <molecule id="O80816-3"/>
    <property type="nucleotide sequence ID" value="NM_001198390.2"/>
</dbReference>
<dbReference type="RefSeq" id="NP_564853.2">
    <molecule id="O80816-1"/>
    <property type="nucleotide sequence ID" value="NM_105220.3"/>
</dbReference>
<dbReference type="SMR" id="O80816"/>
<dbReference type="FunCoup" id="O80816">
    <property type="interactions" value="39"/>
</dbReference>
<dbReference type="STRING" id="3702.O80816"/>
<dbReference type="PaxDb" id="3702-AT1G65450.1"/>
<dbReference type="ProteomicsDB" id="175185"/>
<dbReference type="DNASU" id="842857"/>
<dbReference type="EnsemblPlants" id="AT1G65450.1">
    <molecule id="O80816-1"/>
    <property type="protein sequence ID" value="AT1G65450.1"/>
    <property type="gene ID" value="AT1G65450"/>
</dbReference>
<dbReference type="EnsemblPlants" id="AT1G65450.2">
    <molecule id="O80816-2"/>
    <property type="protein sequence ID" value="AT1G65450.2"/>
    <property type="gene ID" value="AT1G65450"/>
</dbReference>
<dbReference type="EnsemblPlants" id="AT1G65450.3">
    <molecule id="O80816-3"/>
    <property type="protein sequence ID" value="AT1G65450.3"/>
    <property type="gene ID" value="AT1G65450"/>
</dbReference>
<dbReference type="GeneID" id="842857"/>
<dbReference type="Gramene" id="AT1G65450.1">
    <molecule id="O80816-1"/>
    <property type="protein sequence ID" value="AT1G65450.1"/>
    <property type="gene ID" value="AT1G65450"/>
</dbReference>
<dbReference type="Gramene" id="AT1G65450.2">
    <molecule id="O80816-2"/>
    <property type="protein sequence ID" value="AT1G65450.2"/>
    <property type="gene ID" value="AT1G65450"/>
</dbReference>
<dbReference type="Gramene" id="AT1G65450.3">
    <molecule id="O80816-3"/>
    <property type="protein sequence ID" value="AT1G65450.3"/>
    <property type="gene ID" value="AT1G65450"/>
</dbReference>
<dbReference type="KEGG" id="ath:AT1G65450"/>
<dbReference type="Araport" id="AT1G65450"/>
<dbReference type="TAIR" id="AT1G65450">
    <property type="gene designation" value="GLC"/>
</dbReference>
<dbReference type="eggNOG" id="ENOG502QV0F">
    <property type="taxonomic scope" value="Eukaryota"/>
</dbReference>
<dbReference type="HOGENOM" id="CLU_014546_2_0_1"/>
<dbReference type="InParanoid" id="O80816"/>
<dbReference type="OMA" id="AIDWGEI"/>
<dbReference type="PhylomeDB" id="O80816"/>
<dbReference type="BioCyc" id="ARA:AT1G65450-MONOMER"/>
<dbReference type="PRO" id="PR:O80816"/>
<dbReference type="Proteomes" id="UP000006548">
    <property type="component" value="Chromosome 1"/>
</dbReference>
<dbReference type="ExpressionAtlas" id="O80816">
    <property type="expression patterns" value="baseline and differential"/>
</dbReference>
<dbReference type="GO" id="GO:0005737">
    <property type="term" value="C:cytoplasm"/>
    <property type="evidence" value="ECO:0000314"/>
    <property type="project" value="TAIR"/>
</dbReference>
<dbReference type="GO" id="GO:0005634">
    <property type="term" value="C:nucleus"/>
    <property type="evidence" value="ECO:0000314"/>
    <property type="project" value="TAIR"/>
</dbReference>
<dbReference type="GO" id="GO:0016746">
    <property type="term" value="F:acyltransferase activity"/>
    <property type="evidence" value="ECO:0007669"/>
    <property type="project" value="UniProtKB-KW"/>
</dbReference>
<dbReference type="GO" id="GO:0009567">
    <property type="term" value="P:double fertilization forming a zygote and endosperm"/>
    <property type="evidence" value="ECO:0000315"/>
    <property type="project" value="UniProtKB"/>
</dbReference>
<dbReference type="GO" id="GO:0006355">
    <property type="term" value="P:regulation of DNA-templated transcription"/>
    <property type="evidence" value="ECO:0000315"/>
    <property type="project" value="UniProtKB"/>
</dbReference>
<dbReference type="FunFam" id="3.30.559.10:FF:000077">
    <property type="entry name" value="HXXXD-type acyl-transferase family protein"/>
    <property type="match status" value="1"/>
</dbReference>
<dbReference type="FunFam" id="3.30.559.10:FF:000113">
    <property type="entry name" value="HXXXD-type acyl-transferase family protein"/>
    <property type="match status" value="1"/>
</dbReference>
<dbReference type="Gene3D" id="3.30.559.10">
    <property type="entry name" value="Chloramphenicol acetyltransferase-like domain"/>
    <property type="match status" value="2"/>
</dbReference>
<dbReference type="InterPro" id="IPR023213">
    <property type="entry name" value="CAT-like_dom_sf"/>
</dbReference>
<dbReference type="InterPro" id="IPR050317">
    <property type="entry name" value="Plant_Fungal_Acyltransferase"/>
</dbReference>
<dbReference type="PANTHER" id="PTHR31642:SF189">
    <property type="entry name" value="ACYLTRANSFERASE GLAUCE"/>
    <property type="match status" value="1"/>
</dbReference>
<dbReference type="PANTHER" id="PTHR31642">
    <property type="entry name" value="TRICHOTHECENE 3-O-ACETYLTRANSFERASE"/>
    <property type="match status" value="1"/>
</dbReference>
<dbReference type="Pfam" id="PF02458">
    <property type="entry name" value="Transferase"/>
    <property type="match status" value="1"/>
</dbReference>
<dbReference type="SUPFAM" id="SSF52777">
    <property type="entry name" value="CoA-dependent acyltransferases"/>
    <property type="match status" value="1"/>
</dbReference>
<comment type="function">
    <text evidence="2 3">Required for double fertilization of the egg cell and the central cell by two sperm cells, resulting in the formation of the embryo and the endosperm (PubMed:17965055, PubMed:22872756). Involved in the regulation of embryonic expression of PHE1 (PubMed:17965055). Essential in maternal tissues to ensure the paternal embryonic expression of several genes, including RPS5a and FAC1, both of which being essential for early embryo and endosperm development in fertilized seeds (PubMed:17965055).</text>
</comment>
<comment type="subcellular location">
    <subcellularLocation>
        <location evidence="3">Cytoplasm</location>
    </subcellularLocation>
    <subcellularLocation>
        <location evidence="3">Nucleus</location>
    </subcellularLocation>
</comment>
<comment type="alternative products">
    <event type="alternative splicing"/>
    <isoform>
        <id>O80816-1</id>
        <name>1</name>
        <sequence type="displayed"/>
    </isoform>
    <isoform>
        <id>O80816-2</id>
        <name>2</name>
        <sequence type="described" ref="VSP_061484 VSP_061485"/>
    </isoform>
    <isoform>
        <id>O80816-3</id>
        <name>3</name>
        <sequence type="described" ref="VSP_061483"/>
    </isoform>
</comment>
<comment type="tissue specificity">
    <text evidence="3">Restricted to the central cells of embryo sacs.</text>
</comment>
<comment type="developmental stage">
    <molecule>Isoform 2</molecule>
    <text evidence="3">Observed throughout the embryo sac and in sporophytic tissues including the funiculus and the placenta.</text>
</comment>
<comment type="developmental stage">
    <molecule>Isoform 3</molecule>
    <text evidence="3">In the embryo sac, confined to synergid cells (SCs) (PubMed:22872756). Observed in sporophytic tissues including the micropylar end of integuments and placenta (PubMed:22872756).</text>
</comment>
<comment type="disruption phenotype">
    <text evidence="2 3">Female gametophytic mutant which exhibits embryo development without any endosperm due to a successful sperm cell fusion with the egg cell but an impaired fusion of the second sperm cell with the central cell, thus resulting in single fertilization (PubMed:17965055, PubMed:22872756). Embryos can develop up to the globular stage in the absence of endosperm (PubMed:17965055).</text>
</comment>
<comment type="similarity">
    <text evidence="6">Belongs to the plant acyltransferase family.</text>
</comment>
<reference key="1">
    <citation type="journal article" date="2000" name="Nature">
        <title>Sequence and analysis of chromosome 1 of the plant Arabidopsis thaliana.</title>
        <authorList>
            <person name="Theologis A."/>
            <person name="Ecker J.R."/>
            <person name="Palm C.J."/>
            <person name="Federspiel N.A."/>
            <person name="Kaul S."/>
            <person name="White O."/>
            <person name="Alonso J."/>
            <person name="Altafi H."/>
            <person name="Araujo R."/>
            <person name="Bowman C.L."/>
            <person name="Brooks S.Y."/>
            <person name="Buehler E."/>
            <person name="Chan A."/>
            <person name="Chao Q."/>
            <person name="Chen H."/>
            <person name="Cheuk R.F."/>
            <person name="Chin C.W."/>
            <person name="Chung M.K."/>
            <person name="Conn L."/>
            <person name="Conway A.B."/>
            <person name="Conway A.R."/>
            <person name="Creasy T.H."/>
            <person name="Dewar K."/>
            <person name="Dunn P."/>
            <person name="Etgu P."/>
            <person name="Feldblyum T.V."/>
            <person name="Feng J.-D."/>
            <person name="Fong B."/>
            <person name="Fujii C.Y."/>
            <person name="Gill J.E."/>
            <person name="Goldsmith A.D."/>
            <person name="Haas B."/>
            <person name="Hansen N.F."/>
            <person name="Hughes B."/>
            <person name="Huizar L."/>
            <person name="Hunter J.L."/>
            <person name="Jenkins J."/>
            <person name="Johnson-Hopson C."/>
            <person name="Khan S."/>
            <person name="Khaykin E."/>
            <person name="Kim C.J."/>
            <person name="Koo H.L."/>
            <person name="Kremenetskaia I."/>
            <person name="Kurtz D.B."/>
            <person name="Kwan A."/>
            <person name="Lam B."/>
            <person name="Langin-Hooper S."/>
            <person name="Lee A."/>
            <person name="Lee J.M."/>
            <person name="Lenz C.A."/>
            <person name="Li J.H."/>
            <person name="Li Y.-P."/>
            <person name="Lin X."/>
            <person name="Liu S.X."/>
            <person name="Liu Z.A."/>
            <person name="Luros J.S."/>
            <person name="Maiti R."/>
            <person name="Marziali A."/>
            <person name="Militscher J."/>
            <person name="Miranda M."/>
            <person name="Nguyen M."/>
            <person name="Nierman W.C."/>
            <person name="Osborne B.I."/>
            <person name="Pai G."/>
            <person name="Peterson J."/>
            <person name="Pham P.K."/>
            <person name="Rizzo M."/>
            <person name="Rooney T."/>
            <person name="Rowley D."/>
            <person name="Sakano H."/>
            <person name="Salzberg S.L."/>
            <person name="Schwartz J.R."/>
            <person name="Shinn P."/>
            <person name="Southwick A.M."/>
            <person name="Sun H."/>
            <person name="Tallon L.J."/>
            <person name="Tambunga G."/>
            <person name="Toriumi M.J."/>
            <person name="Town C.D."/>
            <person name="Utterback T."/>
            <person name="Van Aken S."/>
            <person name="Vaysberg M."/>
            <person name="Vysotskaia V.S."/>
            <person name="Walker M."/>
            <person name="Wu D."/>
            <person name="Yu G."/>
            <person name="Fraser C.M."/>
            <person name="Venter J.C."/>
            <person name="Davis R.W."/>
        </authorList>
    </citation>
    <scope>NUCLEOTIDE SEQUENCE [LARGE SCALE GENOMIC DNA]</scope>
    <source>
        <strain>cv. Columbia</strain>
    </source>
</reference>
<reference key="2">
    <citation type="journal article" date="2017" name="Plant J.">
        <title>Araport11: a complete reannotation of the Arabidopsis thaliana reference genome.</title>
        <authorList>
            <person name="Cheng C.Y."/>
            <person name="Krishnakumar V."/>
            <person name="Chan A.P."/>
            <person name="Thibaud-Nissen F."/>
            <person name="Schobel S."/>
            <person name="Town C.D."/>
        </authorList>
    </citation>
    <scope>GENOME REANNOTATION</scope>
    <source>
        <strain>cv. Columbia</strain>
    </source>
</reference>
<reference key="3">
    <citation type="journal article" date="2006" name="Plant Biotechnol. J.">
        <title>Simultaneous high-throughput recombinational cloning of open reading frames in closed and open configurations.</title>
        <authorList>
            <person name="Underwood B.A."/>
            <person name="Vanderhaeghen R."/>
            <person name="Whitford R."/>
            <person name="Town C.D."/>
            <person name="Hilson P."/>
        </authorList>
    </citation>
    <scope>NUCLEOTIDE SEQUENCE [LARGE SCALE MRNA] (ISOFORM 2)</scope>
    <source>
        <strain>cv. Columbia</strain>
    </source>
</reference>
<reference key="4">
    <citation type="submission" date="2002-03" db="EMBL/GenBank/DDBJ databases">
        <title>Full-length cDNA from Arabidopsis thaliana.</title>
        <authorList>
            <person name="Brover V.V."/>
            <person name="Troukhan M.E."/>
            <person name="Alexandrov N.A."/>
            <person name="Lu Y.-P."/>
            <person name="Flavell R.B."/>
            <person name="Feldmann K.A."/>
        </authorList>
    </citation>
    <scope>NUCLEOTIDE SEQUENCE [LARGE SCALE MRNA] (ISOFORM 3)</scope>
</reference>
<reference key="5">
    <citation type="journal article" date="2007" name="Development">
        <title>Arabidopsis GLAUCE promotes fertilization-independent endosperm development and expression of paternally inherited alleles.</title>
        <authorList>
            <person name="Ngo Q.A."/>
            <person name="Moore J.M."/>
            <person name="Baskar R."/>
            <person name="Grossniklaus U."/>
            <person name="Sundaresan V."/>
        </authorList>
    </citation>
    <scope>FUNCTION</scope>
    <scope>DISRUPTION PHENOTYPE</scope>
    <source>
        <strain>cv. Columbia</strain>
        <strain>cv. Landsberg erecta</strain>
    </source>
</reference>
<reference key="6">
    <citation type="journal article" date="2012" name="Plant Cell">
        <title>Molecular characterization of the glauce mutant: a central cell-specific function is required for double fertilization in Arabidopsis.</title>
        <authorList>
            <person name="Leshem Y."/>
            <person name="Johnson C."/>
            <person name="Wuest S.E."/>
            <person name="Song X."/>
            <person name="Ngo Q.A."/>
            <person name="Grossniklaus U."/>
            <person name="Sundaresan V."/>
        </authorList>
    </citation>
    <scope>ALTERNATIVE SPLICING</scope>
    <scope>FUNCTION</scope>
    <scope>DISRUPTION PHENOTYPE</scope>
    <scope>TISSUE SPECIFICITY</scope>
    <scope>DEVELOPMENTAL STAGE</scope>
    <scope>SUBCELLULAR LOCATION</scope>
    <source>
        <strain>cv. Landsberg erecta</strain>
    </source>
</reference>
<sequence length="450" mass="50506">MGSSYQESPPLLLEDLKVTIKESTLIFPSEETSERKSMFLSNVDQILNFDVQTVHFFRPNKEFPPEMVSEKLRKALVKLMDAYEFLAGRLRVDPSSGRLDVDCNGAGAGFVTAASDYTLEELGDLVYPNPAFAQLVTSQLQSLPKDDQPLFVFQITSFKCGGFAMGISTNHTTFDGLSFKTFLENLASLLHEKPLSTPPCNDRTLLKARDPPSVAFPHHELVKFQDCETTTVFEATSEHLDFKIFKLSSEQIKKLKERASETSNGNVRVTGFNVVTALVWRCKALSVAAEEGEETNLERESTILYAVDIRGRLNPELPPSYTGNAVLTAYAKEKCKALLEEPFGRIVEMVGEGSKRITDEYARSAIDWGELYKGFPHGEVLVSSWWKLGFAEVEYPWGKPKYSCPVVYHRKDIVLLFPDIDGDSKGVYVLAALPSKEMSKFQHWFEDTLC</sequence>
<keyword id="KW-0012">Acyltransferase</keyword>
<keyword id="KW-0025">Alternative splicing</keyword>
<keyword id="KW-0963">Cytoplasm</keyword>
<keyword id="KW-0278">Fertilization</keyword>
<keyword id="KW-0539">Nucleus</keyword>
<keyword id="KW-1185">Reference proteome</keyword>
<keyword id="KW-0808">Transferase</keyword>
<feature type="chain" id="PRO_0000455300" description="Acyltransferase GLAUCE">
    <location>
        <begin position="1"/>
        <end position="450"/>
    </location>
</feature>
<feature type="active site" description="Proton acceptor" evidence="1">
    <location>
        <position position="171"/>
    </location>
</feature>
<feature type="active site" description="Proton acceptor" evidence="1">
    <location>
        <position position="394"/>
    </location>
</feature>
<feature type="splice variant" id="VSP_061483" description="In isoform 3.">
    <location>
        <begin position="1"/>
        <end position="164"/>
    </location>
</feature>
<feature type="splice variant" id="VSP_061484" description="In isoform 2.">
    <original>ITSFKCGGFAMG</original>
    <variation>EERKKKSKVLSV</variation>
    <location>
        <begin position="155"/>
        <end position="166"/>
    </location>
</feature>
<feature type="splice variant" id="VSP_061485" description="In isoform 2.">
    <location>
        <begin position="167"/>
        <end position="450"/>
    </location>
</feature>
<evidence type="ECO:0000250" key="1">
    <source>
        <dbReference type="UniProtKB" id="Q9FI78"/>
    </source>
</evidence>
<evidence type="ECO:0000269" key="2">
    <source>
    </source>
</evidence>
<evidence type="ECO:0000269" key="3">
    <source>
    </source>
</evidence>
<evidence type="ECO:0000303" key="4">
    <source>
    </source>
</evidence>
<evidence type="ECO:0000303" key="5">
    <source>
    </source>
</evidence>
<evidence type="ECO:0000305" key="6"/>
<evidence type="ECO:0000312" key="7">
    <source>
        <dbReference type="Araport" id="AT1G65450"/>
    </source>
</evidence>
<evidence type="ECO:0000312" key="8">
    <source>
        <dbReference type="EMBL" id="AAC27152.1"/>
    </source>
</evidence>
<proteinExistence type="evidence at transcript level"/>
<protein>
    <recommendedName>
        <fullName evidence="4 5">Acyltransferase GLAUCE</fullName>
        <ecNumber evidence="6">2.3.1.-</ecNumber>
    </recommendedName>
</protein>
<organism>
    <name type="scientific">Arabidopsis thaliana</name>
    <name type="common">Mouse-ear cress</name>
    <dbReference type="NCBI Taxonomy" id="3702"/>
    <lineage>
        <taxon>Eukaryota</taxon>
        <taxon>Viridiplantae</taxon>
        <taxon>Streptophyta</taxon>
        <taxon>Embryophyta</taxon>
        <taxon>Tracheophyta</taxon>
        <taxon>Spermatophyta</taxon>
        <taxon>Magnoliopsida</taxon>
        <taxon>eudicotyledons</taxon>
        <taxon>Gunneridae</taxon>
        <taxon>Pentapetalae</taxon>
        <taxon>rosids</taxon>
        <taxon>malvids</taxon>
        <taxon>Brassicales</taxon>
        <taxon>Brassicaceae</taxon>
        <taxon>Camelineae</taxon>
        <taxon>Arabidopsis</taxon>
    </lineage>
</organism>